<sequence length="73" mass="8161">MLLTNVIKSASGYPKHSLLKSNADWFFIFRFTVPDLLISSTNSSTVAHSLISNLLVNCFKPALPTLEKYFPLT</sequence>
<proteinExistence type="predicted"/>
<organism>
    <name type="scientific">Vaccinia virus (strain Copenhagen)</name>
    <name type="common">VACV</name>
    <dbReference type="NCBI Taxonomy" id="10249"/>
    <lineage>
        <taxon>Viruses</taxon>
        <taxon>Varidnaviria</taxon>
        <taxon>Bamfordvirae</taxon>
        <taxon>Nucleocytoviricota</taxon>
        <taxon>Pokkesviricetes</taxon>
        <taxon>Chitovirales</taxon>
        <taxon>Poxviridae</taxon>
        <taxon>Chordopoxvirinae</taxon>
        <taxon>Orthopoxvirus</taxon>
        <taxon>Vaccinia virus</taxon>
    </lineage>
</organism>
<protein>
    <recommendedName>
        <fullName>Uncharacterized 8.2 kDa protein</fullName>
    </recommendedName>
</protein>
<keyword id="KW-1185">Reference proteome</keyword>
<feature type="chain" id="PRO_0000099650" description="Uncharacterized 8.2 kDa protein">
    <location>
        <begin position="1"/>
        <end position="73"/>
    </location>
</feature>
<gene>
    <name type="ORF">A ORF I</name>
</gene>
<name>YVAI_VACCC</name>
<organismHost>
    <name type="scientific">Homo sapiens</name>
    <name type="common">Human</name>
    <dbReference type="NCBI Taxonomy" id="9606"/>
</organismHost>
<dbReference type="EMBL" id="M35027">
    <property type="protein sequence ID" value="AAA48145.1"/>
    <property type="molecule type" value="Genomic_DNA"/>
</dbReference>
<dbReference type="PIR" id="E42524">
    <property type="entry name" value="E42524"/>
</dbReference>
<dbReference type="Proteomes" id="UP000008269">
    <property type="component" value="Segment"/>
</dbReference>
<accession>P20518</accession>
<reference key="1">
    <citation type="journal article" date="1990" name="Virology">
        <title>The complete DNA sequence of vaccinia virus.</title>
        <authorList>
            <person name="Goebel S.J."/>
            <person name="Johnson G.P."/>
            <person name="Perkus M.E."/>
            <person name="Davis S.W."/>
            <person name="Winslow J.P."/>
            <person name="Paoletti E."/>
        </authorList>
    </citation>
    <scope>NUCLEOTIDE SEQUENCE [LARGE SCALE GENOMIC DNA]</scope>
</reference>
<reference key="2">
    <citation type="journal article" date="1990" name="Virology">
        <title>Appendix to 'The complete DNA sequence of vaccinia virus'.</title>
        <authorList>
            <person name="Goebel S.J."/>
            <person name="Johnson G.P."/>
            <person name="Perkus M.E."/>
            <person name="Davis S.W."/>
            <person name="Winslow J.P."/>
            <person name="Paoletti E."/>
        </authorList>
    </citation>
    <scope>COMPLETE GENOME</scope>
</reference>